<organism>
    <name type="scientific">Rhodococcus hoagii</name>
    <name type="common">Corynebacterium equii</name>
    <dbReference type="NCBI Taxonomy" id="43767"/>
    <lineage>
        <taxon>Bacteria</taxon>
        <taxon>Bacillati</taxon>
        <taxon>Actinomycetota</taxon>
        <taxon>Actinomycetes</taxon>
        <taxon>Mycobacteriales</taxon>
        <taxon>Nocardiaceae</taxon>
        <taxon>Prescottella</taxon>
    </lineage>
</organism>
<protein>
    <recommendedName>
        <fullName evidence="1">Type II restriction enzyme CeqI</fullName>
        <shortName>R.CeqI</shortName>
        <ecNumber>3.1.21.4</ecNumber>
    </recommendedName>
    <alternativeName>
        <fullName>Endonuclease CeqI</fullName>
    </alternativeName>
    <alternativeName>
        <fullName>Type-2 restriction enzyme CeqI</fullName>
    </alternativeName>
</protein>
<comment type="function">
    <text evidence="1">A P subtype restriction enzyme that recognizes the double-stranded sequence 5'-GATATC-3' and cleaves after T-3.</text>
</comment>
<comment type="catalytic activity">
    <reaction>
        <text>Endonucleolytic cleavage of DNA to give specific double-stranded fragments with terminal 5'-phosphates.</text>
        <dbReference type="EC" id="3.1.21.4"/>
    </reaction>
</comment>
<proteinExistence type="predicted"/>
<sequence length="270" mass="31674">MRTKNVCTFQLILFPKVRSYIPLPLILKRIEITKNCISTRGETTKTSVTEKLSEEKTVVVEPVFGFLKAHFHSTRFSEEATKRRKRKWALLVVILRKYTARNSKQKRTKKTRQKGVRSSFIDERTPFSFIFWLVLFRPLFNVLPCSAQSLFVQEFFITSPCLVCPAFPLEQNVSAFAPSTNGTKTKQMITITPMIRFIVVQLLTLRFSYRTVKGISPLRRRAWFFLWFNRSKCFCVGSIHKRNKNKADKQYQTEYSFHCCSTPIIFILVR</sequence>
<keyword id="KW-0255">Endonuclease</keyword>
<keyword id="KW-0378">Hydrolase</keyword>
<keyword id="KW-0540">Nuclease</keyword>
<keyword id="KW-0680">Restriction system</keyword>
<dbReference type="EC" id="3.1.21.4"/>
<dbReference type="EMBL" id="Z34099">
    <property type="protein sequence ID" value="CAA84005.1"/>
    <property type="molecule type" value="Genomic_DNA"/>
</dbReference>
<dbReference type="PRO" id="PR:P42827"/>
<dbReference type="GO" id="GO:0009036">
    <property type="term" value="F:type II site-specific deoxyribonuclease activity"/>
    <property type="evidence" value="ECO:0007669"/>
    <property type="project" value="UniProtKB-EC"/>
</dbReference>
<dbReference type="GO" id="GO:0009307">
    <property type="term" value="P:DNA restriction-modification system"/>
    <property type="evidence" value="ECO:0007669"/>
    <property type="project" value="UniProtKB-KW"/>
</dbReference>
<name>T2C1_RHOHA</name>
<reference key="1">
    <citation type="journal article" date="1997" name="Int. J. Biochem. Cell Biol.">
        <title>Cloning and characterization of the genes of the CeqI restriction-modification system.</title>
        <authorList>
            <person name="Izsvak Z."/>
            <person name="Jobbagy Z."/>
            <person name="Takacs I."/>
            <person name="Duda E."/>
        </authorList>
    </citation>
    <scope>NUCLEOTIDE SEQUENCE [GENOMIC DNA]</scope>
</reference>
<reference key="2">
    <citation type="journal article" date="2003" name="Nucleic Acids Res.">
        <title>A nomenclature for restriction enzymes, DNA methyltransferases, homing endonucleases and their genes.</title>
        <authorList>
            <person name="Roberts R.J."/>
            <person name="Belfort M."/>
            <person name="Bestor T."/>
            <person name="Bhagwat A.S."/>
            <person name="Bickle T.A."/>
            <person name="Bitinaite J."/>
            <person name="Blumenthal R.M."/>
            <person name="Degtyarev S.K."/>
            <person name="Dryden D.T."/>
            <person name="Dybvig K."/>
            <person name="Firman K."/>
            <person name="Gromova E.S."/>
            <person name="Gumport R.I."/>
            <person name="Halford S.E."/>
            <person name="Hattman S."/>
            <person name="Heitman J."/>
            <person name="Hornby D.P."/>
            <person name="Janulaitis A."/>
            <person name="Jeltsch A."/>
            <person name="Josephsen J."/>
            <person name="Kiss A."/>
            <person name="Klaenhammer T.R."/>
            <person name="Kobayashi I."/>
            <person name="Kong H."/>
            <person name="Krueger D.H."/>
            <person name="Lacks S."/>
            <person name="Marinus M.G."/>
            <person name="Miyahara M."/>
            <person name="Morgan R.D."/>
            <person name="Murray N.E."/>
            <person name="Nagaraja V."/>
            <person name="Piekarowicz A."/>
            <person name="Pingoud A."/>
            <person name="Raleigh E."/>
            <person name="Rao D.N."/>
            <person name="Reich N."/>
            <person name="Repin V.E."/>
            <person name="Selker E.U."/>
            <person name="Shaw P.C."/>
            <person name="Stein D.C."/>
            <person name="Stoddard B.L."/>
            <person name="Szybalski W."/>
            <person name="Trautner T.A."/>
            <person name="Van Etten J.L."/>
            <person name="Vitor J.M."/>
            <person name="Wilson G.G."/>
            <person name="Xu S.Y."/>
        </authorList>
    </citation>
    <scope>NOMENCLATURE</scope>
    <scope>SUBTYPE</scope>
</reference>
<accession>P42827</accession>
<gene>
    <name type="primary">ceqIR</name>
    <name type="synonym">rceQI</name>
</gene>
<feature type="chain" id="PRO_0000077293" description="Type II restriction enzyme CeqI">
    <location>
        <begin position="1"/>
        <end position="270"/>
    </location>
</feature>
<evidence type="ECO:0000303" key="1">
    <source>
    </source>
</evidence>